<protein>
    <recommendedName>
        <fullName evidence="2">Ribonuclease J 1</fullName>
        <shortName evidence="2">RNase J1</shortName>
        <ecNumber evidence="2">3.1.-.-</ecNumber>
    </recommendedName>
</protein>
<evidence type="ECO:0000250" key="1"/>
<evidence type="ECO:0000255" key="2">
    <source>
        <dbReference type="HAMAP-Rule" id="MF_01491"/>
    </source>
</evidence>
<dbReference type="EC" id="3.1.-.-" evidence="2"/>
<dbReference type="EMBL" id="BA000033">
    <property type="protein sequence ID" value="BAB94837.1"/>
    <property type="molecule type" value="Genomic_DNA"/>
</dbReference>
<dbReference type="SMR" id="Q7A171"/>
<dbReference type="ABCD" id="Q7A171">
    <property type="antibodies" value="1 sequenced antibody"/>
</dbReference>
<dbReference type="KEGG" id="sam:MW0972"/>
<dbReference type="HOGENOM" id="CLU_008727_3_1_9"/>
<dbReference type="GO" id="GO:0005737">
    <property type="term" value="C:cytoplasm"/>
    <property type="evidence" value="ECO:0007669"/>
    <property type="project" value="UniProtKB-SubCell"/>
</dbReference>
<dbReference type="GO" id="GO:0004534">
    <property type="term" value="F:5'-3' RNA exonuclease activity"/>
    <property type="evidence" value="ECO:0007669"/>
    <property type="project" value="UniProtKB-UniRule"/>
</dbReference>
<dbReference type="GO" id="GO:0003723">
    <property type="term" value="F:RNA binding"/>
    <property type="evidence" value="ECO:0007669"/>
    <property type="project" value="UniProtKB-UniRule"/>
</dbReference>
<dbReference type="GO" id="GO:0004521">
    <property type="term" value="F:RNA endonuclease activity"/>
    <property type="evidence" value="ECO:0007669"/>
    <property type="project" value="UniProtKB-UniRule"/>
</dbReference>
<dbReference type="GO" id="GO:0008270">
    <property type="term" value="F:zinc ion binding"/>
    <property type="evidence" value="ECO:0007669"/>
    <property type="project" value="InterPro"/>
</dbReference>
<dbReference type="GO" id="GO:0006364">
    <property type="term" value="P:rRNA processing"/>
    <property type="evidence" value="ECO:0007669"/>
    <property type="project" value="UniProtKB-UniRule"/>
</dbReference>
<dbReference type="CDD" id="cd07714">
    <property type="entry name" value="RNaseJ_MBL-fold"/>
    <property type="match status" value="1"/>
</dbReference>
<dbReference type="FunFam" id="3.10.20.580:FF:000001">
    <property type="entry name" value="Ribonuclease J"/>
    <property type="match status" value="1"/>
</dbReference>
<dbReference type="Gene3D" id="3.10.20.580">
    <property type="match status" value="1"/>
</dbReference>
<dbReference type="Gene3D" id="3.40.50.10710">
    <property type="entry name" value="Metallo-hydrolase/oxidoreductase"/>
    <property type="match status" value="1"/>
</dbReference>
<dbReference type="Gene3D" id="3.60.15.10">
    <property type="entry name" value="Ribonuclease Z/Hydroxyacylglutathione hydrolase-like"/>
    <property type="match status" value="1"/>
</dbReference>
<dbReference type="HAMAP" id="MF_01491">
    <property type="entry name" value="RNase_J_bact"/>
    <property type="match status" value="1"/>
</dbReference>
<dbReference type="InterPro" id="IPR001279">
    <property type="entry name" value="Metallo-B-lactamas"/>
</dbReference>
<dbReference type="InterPro" id="IPR036866">
    <property type="entry name" value="RibonucZ/Hydroxyglut_hydro"/>
</dbReference>
<dbReference type="InterPro" id="IPR011108">
    <property type="entry name" value="RMMBL"/>
</dbReference>
<dbReference type="InterPro" id="IPR004613">
    <property type="entry name" value="RNase_J"/>
</dbReference>
<dbReference type="InterPro" id="IPR042173">
    <property type="entry name" value="RNase_J_2"/>
</dbReference>
<dbReference type="InterPro" id="IPR055132">
    <property type="entry name" value="RNase_J_b_CASP"/>
</dbReference>
<dbReference type="InterPro" id="IPR030854">
    <property type="entry name" value="RNase_J_bac"/>
</dbReference>
<dbReference type="InterPro" id="IPR041636">
    <property type="entry name" value="RNase_J_C"/>
</dbReference>
<dbReference type="InterPro" id="IPR001587">
    <property type="entry name" value="RNase_J_CS"/>
</dbReference>
<dbReference type="NCBIfam" id="TIGR00649">
    <property type="entry name" value="MG423"/>
    <property type="match status" value="1"/>
</dbReference>
<dbReference type="NCBIfam" id="NF047419">
    <property type="entry name" value="RNase_J1_RnjA"/>
    <property type="match status" value="1"/>
</dbReference>
<dbReference type="PANTHER" id="PTHR43694">
    <property type="entry name" value="RIBONUCLEASE J"/>
    <property type="match status" value="1"/>
</dbReference>
<dbReference type="PANTHER" id="PTHR43694:SF1">
    <property type="entry name" value="RIBONUCLEASE J"/>
    <property type="match status" value="1"/>
</dbReference>
<dbReference type="Pfam" id="PF00753">
    <property type="entry name" value="Lactamase_B"/>
    <property type="match status" value="1"/>
</dbReference>
<dbReference type="Pfam" id="PF07521">
    <property type="entry name" value="RMMBL"/>
    <property type="match status" value="1"/>
</dbReference>
<dbReference type="Pfam" id="PF22505">
    <property type="entry name" value="RNase_J_b_CASP"/>
    <property type="match status" value="1"/>
</dbReference>
<dbReference type="Pfam" id="PF17770">
    <property type="entry name" value="RNase_J_C"/>
    <property type="match status" value="1"/>
</dbReference>
<dbReference type="PIRSF" id="PIRSF004803">
    <property type="entry name" value="RnjA"/>
    <property type="match status" value="1"/>
</dbReference>
<dbReference type="SMART" id="SM00849">
    <property type="entry name" value="Lactamase_B"/>
    <property type="match status" value="1"/>
</dbReference>
<dbReference type="SUPFAM" id="SSF56281">
    <property type="entry name" value="Metallo-hydrolase/oxidoreductase"/>
    <property type="match status" value="1"/>
</dbReference>
<dbReference type="PROSITE" id="PS01292">
    <property type="entry name" value="UPF0036"/>
    <property type="match status" value="1"/>
</dbReference>
<feature type="chain" id="PRO_0000286851" description="Ribonuclease J 1">
    <location>
        <begin position="1"/>
        <end position="565"/>
    </location>
</feature>
<feature type="binding site" evidence="2">
    <location>
        <position position="74"/>
    </location>
    <ligand>
        <name>Zn(2+)</name>
        <dbReference type="ChEBI" id="CHEBI:29105"/>
        <label>1</label>
        <note>catalytic</note>
    </ligand>
</feature>
<feature type="binding site" evidence="2">
    <location>
        <position position="76"/>
    </location>
    <ligand>
        <name>Zn(2+)</name>
        <dbReference type="ChEBI" id="CHEBI:29105"/>
        <label>1</label>
        <note>catalytic</note>
    </ligand>
</feature>
<feature type="binding site" evidence="2">
    <location>
        <position position="78"/>
    </location>
    <ligand>
        <name>Zn(2+)</name>
        <dbReference type="ChEBI" id="CHEBI:29105"/>
        <label>2</label>
        <note>catalytic</note>
    </ligand>
</feature>
<feature type="binding site" evidence="2">
    <location>
        <position position="79"/>
    </location>
    <ligand>
        <name>Zn(2+)</name>
        <dbReference type="ChEBI" id="CHEBI:29105"/>
        <label>2</label>
        <note>catalytic</note>
    </ligand>
</feature>
<feature type="binding site" evidence="2">
    <location>
        <position position="142"/>
    </location>
    <ligand>
        <name>Zn(2+)</name>
        <dbReference type="ChEBI" id="CHEBI:29105"/>
        <label>1</label>
        <note>catalytic</note>
    </ligand>
</feature>
<feature type="binding site" evidence="2">
    <location>
        <position position="164"/>
    </location>
    <ligand>
        <name>Zn(2+)</name>
        <dbReference type="ChEBI" id="CHEBI:29105"/>
        <label>1</label>
        <note>catalytic</note>
    </ligand>
</feature>
<feature type="binding site" evidence="2">
    <location>
        <position position="164"/>
    </location>
    <ligand>
        <name>Zn(2+)</name>
        <dbReference type="ChEBI" id="CHEBI:29105"/>
        <label>2</label>
        <note>catalytic</note>
    </ligand>
</feature>
<feature type="binding site" evidence="2">
    <location>
        <begin position="364"/>
        <end position="368"/>
    </location>
    <ligand>
        <name>substrate</name>
    </ligand>
</feature>
<feature type="binding site" evidence="2">
    <location>
        <position position="390"/>
    </location>
    <ligand>
        <name>Zn(2+)</name>
        <dbReference type="ChEBI" id="CHEBI:29105"/>
        <label>2</label>
        <note>catalytic</note>
    </ligand>
</feature>
<comment type="function">
    <text evidence="1">An RNase that has 5'-3' exonuclease and possibly endoonuclease activity. Involved in maturation of rRNA and in some organisms also mRNA maturation and/or decay (By similarity).</text>
</comment>
<comment type="cofactor">
    <cofactor evidence="2">
        <name>Zn(2+)</name>
        <dbReference type="ChEBI" id="CHEBI:29105"/>
    </cofactor>
    <text evidence="2">Binds up to 2 Zn(2+) ions per subunit. It is not clear if Zn(2+) or Mg(2+) is physiologically important.</text>
</comment>
<comment type="subunit">
    <text evidence="2">Homodimer, may be a subunit of the RNA degradosome.</text>
</comment>
<comment type="subcellular location">
    <subcellularLocation>
        <location evidence="2">Cytoplasm</location>
    </subcellularLocation>
</comment>
<comment type="similarity">
    <text evidence="2">Belongs to the metallo-beta-lactamase superfamily. RNA-metabolizing metallo-beta-lactamase-like family. Bacterial RNase J subfamily.</text>
</comment>
<organism>
    <name type="scientific">Staphylococcus aureus (strain MW2)</name>
    <dbReference type="NCBI Taxonomy" id="196620"/>
    <lineage>
        <taxon>Bacteria</taxon>
        <taxon>Bacillati</taxon>
        <taxon>Bacillota</taxon>
        <taxon>Bacilli</taxon>
        <taxon>Bacillales</taxon>
        <taxon>Staphylococcaceae</taxon>
        <taxon>Staphylococcus</taxon>
    </lineage>
</organism>
<keyword id="KW-0963">Cytoplasm</keyword>
<keyword id="KW-0255">Endonuclease</keyword>
<keyword id="KW-0269">Exonuclease</keyword>
<keyword id="KW-0378">Hydrolase</keyword>
<keyword id="KW-0479">Metal-binding</keyword>
<keyword id="KW-0540">Nuclease</keyword>
<keyword id="KW-0694">RNA-binding</keyword>
<keyword id="KW-0698">rRNA processing</keyword>
<keyword id="KW-0862">Zinc</keyword>
<reference key="1">
    <citation type="journal article" date="2002" name="Lancet">
        <title>Genome and virulence determinants of high virulence community-acquired MRSA.</title>
        <authorList>
            <person name="Baba T."/>
            <person name="Takeuchi F."/>
            <person name="Kuroda M."/>
            <person name="Yuzawa H."/>
            <person name="Aoki K."/>
            <person name="Oguchi A."/>
            <person name="Nagai Y."/>
            <person name="Iwama N."/>
            <person name="Asano K."/>
            <person name="Naimi T."/>
            <person name="Kuroda H."/>
            <person name="Cui L."/>
            <person name="Yamamoto K."/>
            <person name="Hiramatsu K."/>
        </authorList>
    </citation>
    <scope>NUCLEOTIDE SEQUENCE [LARGE SCALE GENOMIC DNA]</scope>
    <source>
        <strain>MW2</strain>
    </source>
</reference>
<name>RNJ1_STAAW</name>
<accession>Q7A171</accession>
<sequence length="565" mass="62669">MKQLHPNEVGVYALGGLGEIGKNTYAVEYKDEIVIIDAGIKFPDDNLLGIDYVIPDYTYLVQNQDKIVGLFITHGHEDHIGGVPFLLKQLNIPIYGGPLALGLIRNKLEEHHLLRTAKLNEINEDSVIKSKHFTISFYLTTHSIPETYGVIVDTPEGKVVHTGDFKFDFTPVGKPANIAKMAQLGEEGVLCLLSDSTNSLVPDFTLSEREVGQNVDKIFRNCKGRIIFATFASNIYRVQQAVEAAIKNNRKIVTFGRSMENNIKIGMELGYIKAPPETFIEPNKINTVPKHELLILCTGSQGEPMAALSRIANGTHKQIKIIPEDTVVFSSSPIPGNTKSINRTINSLYKAGADVIHSKISNIHTSGHGSQGDQQLMLRLIKPKYFLPIHGEYRMLKAHGETGVECGVEEDNVFIFDIGDVLALTHDSARKAGRIPSGNVLVDGSGIGDIGNVVIRDRKLLSEEGLVIVVVSIDFNTNKLLSGPDIISRGFVYMRESGQLIYDAQRKIKTDVISKLNQNKDIQWHQIKSSIIETLQPYLFEKTARKPMILPVIMKVNEQKESNNK</sequence>
<gene>
    <name evidence="2" type="primary">rnj1</name>
    <name type="ordered locus">MW0972</name>
</gene>
<proteinExistence type="inferred from homology"/>